<name>T161B_MOUSE</name>
<keyword id="KW-1003">Cell membrane</keyword>
<keyword id="KW-0325">Glycoprotein</keyword>
<keyword id="KW-0472">Membrane</keyword>
<keyword id="KW-1185">Reference proteome</keyword>
<keyword id="KW-0812">Transmembrane</keyword>
<keyword id="KW-1133">Transmembrane helix</keyword>
<reference key="1">
    <citation type="journal article" date="2005" name="Science">
        <title>The transcriptional landscape of the mammalian genome.</title>
        <authorList>
            <person name="Carninci P."/>
            <person name="Kasukawa T."/>
            <person name="Katayama S."/>
            <person name="Gough J."/>
            <person name="Frith M.C."/>
            <person name="Maeda N."/>
            <person name="Oyama R."/>
            <person name="Ravasi T."/>
            <person name="Lenhard B."/>
            <person name="Wells C."/>
            <person name="Kodzius R."/>
            <person name="Shimokawa K."/>
            <person name="Bajic V.B."/>
            <person name="Brenner S.E."/>
            <person name="Batalov S."/>
            <person name="Forrest A.R."/>
            <person name="Zavolan M."/>
            <person name="Davis M.J."/>
            <person name="Wilming L.G."/>
            <person name="Aidinis V."/>
            <person name="Allen J.E."/>
            <person name="Ambesi-Impiombato A."/>
            <person name="Apweiler R."/>
            <person name="Aturaliya R.N."/>
            <person name="Bailey T.L."/>
            <person name="Bansal M."/>
            <person name="Baxter L."/>
            <person name="Beisel K.W."/>
            <person name="Bersano T."/>
            <person name="Bono H."/>
            <person name="Chalk A.M."/>
            <person name="Chiu K.P."/>
            <person name="Choudhary V."/>
            <person name="Christoffels A."/>
            <person name="Clutterbuck D.R."/>
            <person name="Crowe M.L."/>
            <person name="Dalla E."/>
            <person name="Dalrymple B.P."/>
            <person name="de Bono B."/>
            <person name="Della Gatta G."/>
            <person name="di Bernardo D."/>
            <person name="Down T."/>
            <person name="Engstrom P."/>
            <person name="Fagiolini M."/>
            <person name="Faulkner G."/>
            <person name="Fletcher C.F."/>
            <person name="Fukushima T."/>
            <person name="Furuno M."/>
            <person name="Futaki S."/>
            <person name="Gariboldi M."/>
            <person name="Georgii-Hemming P."/>
            <person name="Gingeras T.R."/>
            <person name="Gojobori T."/>
            <person name="Green R.E."/>
            <person name="Gustincich S."/>
            <person name="Harbers M."/>
            <person name="Hayashi Y."/>
            <person name="Hensch T.K."/>
            <person name="Hirokawa N."/>
            <person name="Hill D."/>
            <person name="Huminiecki L."/>
            <person name="Iacono M."/>
            <person name="Ikeo K."/>
            <person name="Iwama A."/>
            <person name="Ishikawa T."/>
            <person name="Jakt M."/>
            <person name="Kanapin A."/>
            <person name="Katoh M."/>
            <person name="Kawasawa Y."/>
            <person name="Kelso J."/>
            <person name="Kitamura H."/>
            <person name="Kitano H."/>
            <person name="Kollias G."/>
            <person name="Krishnan S.P."/>
            <person name="Kruger A."/>
            <person name="Kummerfeld S.K."/>
            <person name="Kurochkin I.V."/>
            <person name="Lareau L.F."/>
            <person name="Lazarevic D."/>
            <person name="Lipovich L."/>
            <person name="Liu J."/>
            <person name="Liuni S."/>
            <person name="McWilliam S."/>
            <person name="Madan Babu M."/>
            <person name="Madera M."/>
            <person name="Marchionni L."/>
            <person name="Matsuda H."/>
            <person name="Matsuzawa S."/>
            <person name="Miki H."/>
            <person name="Mignone F."/>
            <person name="Miyake S."/>
            <person name="Morris K."/>
            <person name="Mottagui-Tabar S."/>
            <person name="Mulder N."/>
            <person name="Nakano N."/>
            <person name="Nakauchi H."/>
            <person name="Ng P."/>
            <person name="Nilsson R."/>
            <person name="Nishiguchi S."/>
            <person name="Nishikawa S."/>
            <person name="Nori F."/>
            <person name="Ohara O."/>
            <person name="Okazaki Y."/>
            <person name="Orlando V."/>
            <person name="Pang K.C."/>
            <person name="Pavan W.J."/>
            <person name="Pavesi G."/>
            <person name="Pesole G."/>
            <person name="Petrovsky N."/>
            <person name="Piazza S."/>
            <person name="Reed J."/>
            <person name="Reid J.F."/>
            <person name="Ring B.Z."/>
            <person name="Ringwald M."/>
            <person name="Rost B."/>
            <person name="Ruan Y."/>
            <person name="Salzberg S.L."/>
            <person name="Sandelin A."/>
            <person name="Schneider C."/>
            <person name="Schoenbach C."/>
            <person name="Sekiguchi K."/>
            <person name="Semple C.A."/>
            <person name="Seno S."/>
            <person name="Sessa L."/>
            <person name="Sheng Y."/>
            <person name="Shibata Y."/>
            <person name="Shimada H."/>
            <person name="Shimada K."/>
            <person name="Silva D."/>
            <person name="Sinclair B."/>
            <person name="Sperling S."/>
            <person name="Stupka E."/>
            <person name="Sugiura K."/>
            <person name="Sultana R."/>
            <person name="Takenaka Y."/>
            <person name="Taki K."/>
            <person name="Tammoja K."/>
            <person name="Tan S.L."/>
            <person name="Tang S."/>
            <person name="Taylor M.S."/>
            <person name="Tegner J."/>
            <person name="Teichmann S.A."/>
            <person name="Ueda H.R."/>
            <person name="van Nimwegen E."/>
            <person name="Verardo R."/>
            <person name="Wei C.L."/>
            <person name="Yagi K."/>
            <person name="Yamanishi H."/>
            <person name="Zabarovsky E."/>
            <person name="Zhu S."/>
            <person name="Zimmer A."/>
            <person name="Hide W."/>
            <person name="Bult C."/>
            <person name="Grimmond S.M."/>
            <person name="Teasdale R.D."/>
            <person name="Liu E.T."/>
            <person name="Brusic V."/>
            <person name="Quackenbush J."/>
            <person name="Wahlestedt C."/>
            <person name="Mattick J.S."/>
            <person name="Hume D.A."/>
            <person name="Kai C."/>
            <person name="Sasaki D."/>
            <person name="Tomaru Y."/>
            <person name="Fukuda S."/>
            <person name="Kanamori-Katayama M."/>
            <person name="Suzuki M."/>
            <person name="Aoki J."/>
            <person name="Arakawa T."/>
            <person name="Iida J."/>
            <person name="Imamura K."/>
            <person name="Itoh M."/>
            <person name="Kato T."/>
            <person name="Kawaji H."/>
            <person name="Kawagashira N."/>
            <person name="Kawashima T."/>
            <person name="Kojima M."/>
            <person name="Kondo S."/>
            <person name="Konno H."/>
            <person name="Nakano K."/>
            <person name="Ninomiya N."/>
            <person name="Nishio T."/>
            <person name="Okada M."/>
            <person name="Plessy C."/>
            <person name="Shibata K."/>
            <person name="Shiraki T."/>
            <person name="Suzuki S."/>
            <person name="Tagami M."/>
            <person name="Waki K."/>
            <person name="Watahiki A."/>
            <person name="Okamura-Oho Y."/>
            <person name="Suzuki H."/>
            <person name="Kawai J."/>
            <person name="Hayashizaki Y."/>
        </authorList>
    </citation>
    <scope>NUCLEOTIDE SEQUENCE [LARGE SCALE MRNA]</scope>
    <source>
        <strain>C57BL/6J</strain>
        <strain>NOD</strain>
        <tissue>Embryo</tissue>
        <tissue>Thymus</tissue>
    </source>
</reference>
<reference key="2">
    <citation type="journal article" date="2004" name="Genome Res.">
        <title>The status, quality, and expansion of the NIH full-length cDNA project: the Mammalian Gene Collection (MGC).</title>
        <authorList>
            <consortium name="The MGC Project Team"/>
        </authorList>
    </citation>
    <scope>NUCLEOTIDE SEQUENCE [LARGE SCALE MRNA]</scope>
    <source>
        <strain>C57BL/6J</strain>
        <tissue>Embryo</tissue>
    </source>
</reference>
<reference key="3">
    <citation type="journal article" date="2021" name="Proc. Natl. Acad. Sci. U.S.A.">
        <title>The zebrafish grime mutant uncovers an evolutionarily conserved role for Tmem161b in the control of cardiac rhythm.</title>
        <authorList>
            <person name="Koopman C.D."/>
            <person name="De Angelis J."/>
            <person name="Iyer S.P."/>
            <person name="Verkerk A.O."/>
            <person name="Da Silva J."/>
            <person name="Berecki G."/>
            <person name="Jeanes A."/>
            <person name="Baillie G.J."/>
            <person name="Paterson S."/>
            <person name="Uribe V."/>
            <person name="Ehrlich O.V."/>
            <person name="Robinson S.D."/>
            <person name="Garric L."/>
            <person name="Petrou S."/>
            <person name="Simons C."/>
            <person name="Vetter I."/>
            <person name="Hogan B.M."/>
            <person name="de Boer T.P."/>
            <person name="Bakkers J."/>
            <person name="Smith K.A."/>
        </authorList>
    </citation>
    <scope>FUNCTION</scope>
    <scope>DISRUPTION PHENOTYPE</scope>
</reference>
<evidence type="ECO:0000250" key="1">
    <source>
        <dbReference type="UniProtKB" id="Q7SY10"/>
    </source>
</evidence>
<evidence type="ECO:0000255" key="2"/>
<evidence type="ECO:0000269" key="3">
    <source>
    </source>
</evidence>
<evidence type="ECO:0000305" key="4"/>
<sequence>MGVIGIQLVVTMVMASVMQKIIPHYSLARWLLCNGSLRWYQHPSEEELRILAGKQQKGKSKKDRKYNGHIENKPLTIPKDIDLHLETKSVTEVDTLALHYFPEYQWLVDFTVAATIVYLVTEVYYSFMKPTQEMNISLVWCLLVLSFAIKVLFSLTTHYFKVEDGGERSVCVTFGFFFFVKAMAVLIVTENYLEFGLETGFTNFSDSAMQFLEKQGLESQGPVSKLTFKFFLAVFCSLIGAFLTFPGLRLAQMHLDALNMATEKITQTLLHINFLAPLFMVLLWVKPITKDYIMNPPLGRESVPLMTEATFDTLRLWLIILLCVLRLAMMRSHLQAYLNLAQKCVDQMKKEAGRISTVELQKMVARVFYYLCVIALQYVAPLVMLLHMTLLLKTLGNHSWGIYPEAAFPLPVDNNLPANSAYPELPSPDGKMKVTVTQITVALSSLKNIFTPLLFRGLLSFLTWWIAACLFSTSLFGLFYHQYLTVA</sequence>
<organism>
    <name type="scientific">Mus musculus</name>
    <name type="common">Mouse</name>
    <dbReference type="NCBI Taxonomy" id="10090"/>
    <lineage>
        <taxon>Eukaryota</taxon>
        <taxon>Metazoa</taxon>
        <taxon>Chordata</taxon>
        <taxon>Craniata</taxon>
        <taxon>Vertebrata</taxon>
        <taxon>Euteleostomi</taxon>
        <taxon>Mammalia</taxon>
        <taxon>Eutheria</taxon>
        <taxon>Euarchontoglires</taxon>
        <taxon>Glires</taxon>
        <taxon>Rodentia</taxon>
        <taxon>Myomorpha</taxon>
        <taxon>Muroidea</taxon>
        <taxon>Muridae</taxon>
        <taxon>Murinae</taxon>
        <taxon>Mus</taxon>
        <taxon>Mus</taxon>
    </lineage>
</organism>
<feature type="chain" id="PRO_0000288090" description="Transmembrane protein 161B">
    <location>
        <begin position="1"/>
        <end position="487"/>
    </location>
</feature>
<feature type="transmembrane region" description="Helical" evidence="2">
    <location>
        <begin position="107"/>
        <end position="127"/>
    </location>
</feature>
<feature type="transmembrane region" description="Helical" evidence="2">
    <location>
        <begin position="136"/>
        <end position="156"/>
    </location>
</feature>
<feature type="transmembrane region" description="Helical" evidence="2">
    <location>
        <begin position="169"/>
        <end position="189"/>
    </location>
</feature>
<feature type="transmembrane region" description="Helical" evidence="2">
    <location>
        <begin position="228"/>
        <end position="248"/>
    </location>
</feature>
<feature type="transmembrane region" description="Helical" evidence="2">
    <location>
        <begin position="265"/>
        <end position="285"/>
    </location>
</feature>
<feature type="transmembrane region" description="Helical" evidence="2">
    <location>
        <begin position="305"/>
        <end position="325"/>
    </location>
</feature>
<feature type="transmembrane region" description="Helical" evidence="2">
    <location>
        <begin position="367"/>
        <end position="387"/>
    </location>
</feature>
<feature type="transmembrane region" description="Helical" evidence="2">
    <location>
        <begin position="459"/>
        <end position="479"/>
    </location>
</feature>
<feature type="glycosylation site" description="N-linked (GlcNAc...) asparagine" evidence="2">
    <location>
        <position position="34"/>
    </location>
</feature>
<feature type="glycosylation site" description="N-linked (GlcNAc...) asparagine" evidence="2">
    <location>
        <position position="135"/>
    </location>
</feature>
<feature type="glycosylation site" description="N-linked (GlcNAc...) asparagine" evidence="2">
    <location>
        <position position="203"/>
    </location>
</feature>
<accession>Q8C2L6</accession>
<accession>Q8BT72</accession>
<protein>
    <recommendedName>
        <fullName>Transmembrane protein 161B</fullName>
    </recommendedName>
</protein>
<gene>
    <name type="primary">Tmem161b</name>
</gene>
<comment type="function">
    <text evidence="3">Essential for maintaining normal cardiac rhythm in the developing heart and for neonatal survival (PubMed:33597309). Inhibits potassium and calcium currents in the cardiomyocytes, this assists in timely action potential repolarization and thereby maintains normal cardiac rhythm (PubMed:33597309).</text>
</comment>
<comment type="subcellular location">
    <subcellularLocation>
        <location evidence="1">Cell membrane</location>
        <topology evidence="2">Multi-pass membrane protein</topology>
    </subcellularLocation>
</comment>
<comment type="disruption phenotype">
    <text evidence="3">Knockout mice are perinatal lethal and isolated embryonic cardiomyocytes exhibit arrhythmic calcium oscillations.</text>
</comment>
<comment type="similarity">
    <text evidence="4">Belongs to the TMEM161 family.</text>
</comment>
<proteinExistence type="evidence at transcript level"/>
<dbReference type="EMBL" id="AK088393">
    <property type="protein sequence ID" value="BAC40324.1"/>
    <property type="molecule type" value="mRNA"/>
</dbReference>
<dbReference type="EMBL" id="AK013305">
    <property type="protein sequence ID" value="BAC25401.1"/>
    <property type="molecule type" value="mRNA"/>
</dbReference>
<dbReference type="EMBL" id="BC051663">
    <property type="protein sequence ID" value="AAH51663.1"/>
    <property type="molecule type" value="mRNA"/>
</dbReference>
<dbReference type="CCDS" id="CCDS36739.1"/>
<dbReference type="RefSeq" id="NP_780396.2">
    <property type="nucleotide sequence ID" value="NM_175187.5"/>
</dbReference>
<dbReference type="RefSeq" id="XP_006517466.1">
    <property type="nucleotide sequence ID" value="XM_006517403.3"/>
</dbReference>
<dbReference type="RefSeq" id="XP_006517467.1">
    <property type="nucleotide sequence ID" value="XM_006517404.3"/>
</dbReference>
<dbReference type="RefSeq" id="XP_006517468.1">
    <property type="nucleotide sequence ID" value="XM_006517405.3"/>
</dbReference>
<dbReference type="RefSeq" id="XP_011242867.1">
    <property type="nucleotide sequence ID" value="XM_011244565.2"/>
</dbReference>
<dbReference type="BioGRID" id="215544">
    <property type="interactions" value="1"/>
</dbReference>
<dbReference type="FunCoup" id="Q8C2L6">
    <property type="interactions" value="145"/>
</dbReference>
<dbReference type="STRING" id="10090.ENSMUSP00000055208"/>
<dbReference type="GlyCosmos" id="Q8C2L6">
    <property type="glycosylation" value="3 sites, No reported glycans"/>
</dbReference>
<dbReference type="GlyGen" id="Q8C2L6">
    <property type="glycosylation" value="3 sites"/>
</dbReference>
<dbReference type="PhosphoSitePlus" id="Q8C2L6"/>
<dbReference type="SwissPalm" id="Q8C2L6"/>
<dbReference type="PaxDb" id="10090-ENSMUSP00000055208"/>
<dbReference type="ProteomicsDB" id="263220"/>
<dbReference type="Antibodypedia" id="50472">
    <property type="antibodies" value="72 antibodies from 15 providers"/>
</dbReference>
<dbReference type="DNASU" id="72745"/>
<dbReference type="Ensembl" id="ENSMUST00000057495.10">
    <property type="protein sequence ID" value="ENSMUSP00000055208.8"/>
    <property type="gene ID" value="ENSMUSG00000035762.12"/>
</dbReference>
<dbReference type="GeneID" id="72745"/>
<dbReference type="KEGG" id="mmu:72745"/>
<dbReference type="UCSC" id="uc007rip.2">
    <property type="organism name" value="mouse"/>
</dbReference>
<dbReference type="AGR" id="MGI:1919995"/>
<dbReference type="CTD" id="153396"/>
<dbReference type="MGI" id="MGI:1919995">
    <property type="gene designation" value="Tmem161b"/>
</dbReference>
<dbReference type="VEuPathDB" id="HostDB:ENSMUSG00000035762"/>
<dbReference type="eggNOG" id="KOG3978">
    <property type="taxonomic scope" value="Eukaryota"/>
</dbReference>
<dbReference type="GeneTree" id="ENSGT00390000000672"/>
<dbReference type="HOGENOM" id="CLU_027277_0_0_1"/>
<dbReference type="InParanoid" id="Q8C2L6"/>
<dbReference type="OMA" id="RFALMPI"/>
<dbReference type="OrthoDB" id="784140at2759"/>
<dbReference type="PhylomeDB" id="Q8C2L6"/>
<dbReference type="TreeFam" id="TF314570"/>
<dbReference type="BioGRID-ORCS" id="72745">
    <property type="hits" value="4 hits in 79 CRISPR screens"/>
</dbReference>
<dbReference type="ChiTaRS" id="Tmem161b">
    <property type="organism name" value="mouse"/>
</dbReference>
<dbReference type="PRO" id="PR:Q8C2L6"/>
<dbReference type="Proteomes" id="UP000000589">
    <property type="component" value="Chromosome 13"/>
</dbReference>
<dbReference type="RNAct" id="Q8C2L6">
    <property type="molecule type" value="protein"/>
</dbReference>
<dbReference type="Bgee" id="ENSMUSG00000035762">
    <property type="expression patterns" value="Expressed in spermatocyte and 235 other cell types or tissues"/>
</dbReference>
<dbReference type="ExpressionAtlas" id="Q8C2L6">
    <property type="expression patterns" value="baseline and differential"/>
</dbReference>
<dbReference type="GO" id="GO:0005886">
    <property type="term" value="C:plasma membrane"/>
    <property type="evidence" value="ECO:0000250"/>
    <property type="project" value="UniProtKB"/>
</dbReference>
<dbReference type="GO" id="GO:0098901">
    <property type="term" value="P:regulation of cardiac muscle cell action potential"/>
    <property type="evidence" value="ECO:0000315"/>
    <property type="project" value="UniProtKB"/>
</dbReference>
<dbReference type="GO" id="GO:0002027">
    <property type="term" value="P:regulation of heart rate"/>
    <property type="evidence" value="ECO:0000315"/>
    <property type="project" value="UniProtKB"/>
</dbReference>
<dbReference type="InterPro" id="IPR019395">
    <property type="entry name" value="Transmembrane_161A/B"/>
</dbReference>
<dbReference type="PANTHER" id="PTHR13624">
    <property type="entry name" value="RE42071P"/>
    <property type="match status" value="1"/>
</dbReference>
<dbReference type="PANTHER" id="PTHR13624:SF3">
    <property type="entry name" value="TRANSMEMBRANE PROTEIN 161B"/>
    <property type="match status" value="1"/>
</dbReference>
<dbReference type="Pfam" id="PF10268">
    <property type="entry name" value="Tmemb_161AB"/>
    <property type="match status" value="1"/>
</dbReference>